<accession>P66859</accession>
<accession>G0K7Y8</accession>
<accession>Q8YG61</accession>
<reference key="1">
    <citation type="journal article" date="2002" name="Proc. Natl. Acad. Sci. U.S.A.">
        <title>The Brucella suis genome reveals fundamental similarities between animal and plant pathogens and symbionts.</title>
        <authorList>
            <person name="Paulsen I.T."/>
            <person name="Seshadri R."/>
            <person name="Nelson K.E."/>
            <person name="Eisen J.A."/>
            <person name="Heidelberg J.F."/>
            <person name="Read T.D."/>
            <person name="Dodson R.J."/>
            <person name="Umayam L.A."/>
            <person name="Brinkac L.M."/>
            <person name="Beanan M.J."/>
            <person name="Daugherty S.C."/>
            <person name="DeBoy R.T."/>
            <person name="Durkin A.S."/>
            <person name="Kolonay J.F."/>
            <person name="Madupu R."/>
            <person name="Nelson W.C."/>
            <person name="Ayodeji B."/>
            <person name="Kraul M."/>
            <person name="Shetty J."/>
            <person name="Malek J.A."/>
            <person name="Van Aken S.E."/>
            <person name="Riedmuller S."/>
            <person name="Tettelin H."/>
            <person name="Gill S.R."/>
            <person name="White O."/>
            <person name="Salzberg S.L."/>
            <person name="Hoover D.L."/>
            <person name="Lindler L.E."/>
            <person name="Halling S.M."/>
            <person name="Boyle S.M."/>
            <person name="Fraser C.M."/>
        </authorList>
    </citation>
    <scope>NUCLEOTIDE SEQUENCE [LARGE SCALE GENOMIC DNA]</scope>
    <source>
        <strain>1330</strain>
    </source>
</reference>
<reference key="2">
    <citation type="journal article" date="2011" name="J. Bacteriol.">
        <title>Revised genome sequence of Brucella suis 1330.</title>
        <authorList>
            <person name="Tae H."/>
            <person name="Shallom S."/>
            <person name="Settlage R."/>
            <person name="Preston D."/>
            <person name="Adams L.G."/>
            <person name="Garner H.R."/>
        </authorList>
    </citation>
    <scope>NUCLEOTIDE SEQUENCE [LARGE SCALE GENOMIC DNA]</scope>
    <source>
        <strain>1330</strain>
    </source>
</reference>
<sequence length="158" mass="18570">MNKPKNSPARKMIAENRKARFNFEILDTLEAGLVLTGTEVKSLRANQANIAESYASFEDGEFWLINSYIPEYTQGNRFNHEPRRLRKLLVSRREMSRLFNSVSREGMTVVPLKLYFNDRGRAKLELALARGKKTHDKRETEKKRDWNREKARLLRDRG</sequence>
<gene>
    <name evidence="1" type="primary">smpB</name>
    <name type="ordered locus">BR0647</name>
    <name type="ordered locus">BS1330_I0643</name>
</gene>
<feature type="chain" id="PRO_0000102919" description="SsrA-binding protein">
    <location>
        <begin position="1"/>
        <end position="158"/>
    </location>
</feature>
<feature type="region of interest" description="Disordered" evidence="2">
    <location>
        <begin position="131"/>
        <end position="158"/>
    </location>
</feature>
<feature type="compositionally biased region" description="Basic and acidic residues" evidence="2">
    <location>
        <begin position="136"/>
        <end position="158"/>
    </location>
</feature>
<evidence type="ECO:0000255" key="1">
    <source>
        <dbReference type="HAMAP-Rule" id="MF_00023"/>
    </source>
</evidence>
<evidence type="ECO:0000256" key="2">
    <source>
        <dbReference type="SAM" id="MobiDB-lite"/>
    </source>
</evidence>
<proteinExistence type="inferred from homology"/>
<keyword id="KW-0963">Cytoplasm</keyword>
<keyword id="KW-0694">RNA-binding</keyword>
<protein>
    <recommendedName>
        <fullName evidence="1">SsrA-binding protein</fullName>
    </recommendedName>
    <alternativeName>
        <fullName evidence="1">Small protein B</fullName>
    </alternativeName>
</protein>
<dbReference type="EMBL" id="AE014291">
    <property type="protein sequence ID" value="AAN29576.1"/>
    <property type="molecule type" value="Genomic_DNA"/>
</dbReference>
<dbReference type="EMBL" id="CP002997">
    <property type="protein sequence ID" value="AEM17993.1"/>
    <property type="molecule type" value="Genomic_DNA"/>
</dbReference>
<dbReference type="RefSeq" id="WP_002963791.1">
    <property type="nucleotide sequence ID" value="NZ_KN046804.1"/>
</dbReference>
<dbReference type="SMR" id="P66859"/>
<dbReference type="GeneID" id="97534023"/>
<dbReference type="KEGG" id="bms:BR0647"/>
<dbReference type="KEGG" id="bsi:BS1330_I0643"/>
<dbReference type="PATRIC" id="fig|204722.22.peg.1195"/>
<dbReference type="HOGENOM" id="CLU_108953_0_1_5"/>
<dbReference type="PhylomeDB" id="P66859"/>
<dbReference type="Proteomes" id="UP000007104">
    <property type="component" value="Chromosome I"/>
</dbReference>
<dbReference type="GO" id="GO:0005829">
    <property type="term" value="C:cytosol"/>
    <property type="evidence" value="ECO:0007669"/>
    <property type="project" value="TreeGrafter"/>
</dbReference>
<dbReference type="GO" id="GO:0003723">
    <property type="term" value="F:RNA binding"/>
    <property type="evidence" value="ECO:0007669"/>
    <property type="project" value="UniProtKB-UniRule"/>
</dbReference>
<dbReference type="GO" id="GO:0070929">
    <property type="term" value="P:trans-translation"/>
    <property type="evidence" value="ECO:0007669"/>
    <property type="project" value="UniProtKB-UniRule"/>
</dbReference>
<dbReference type="CDD" id="cd09294">
    <property type="entry name" value="SmpB"/>
    <property type="match status" value="1"/>
</dbReference>
<dbReference type="Gene3D" id="2.40.280.10">
    <property type="match status" value="1"/>
</dbReference>
<dbReference type="HAMAP" id="MF_00023">
    <property type="entry name" value="SmpB"/>
    <property type="match status" value="1"/>
</dbReference>
<dbReference type="InterPro" id="IPR023620">
    <property type="entry name" value="SmpB"/>
</dbReference>
<dbReference type="InterPro" id="IPR000037">
    <property type="entry name" value="SsrA-bd_prot"/>
</dbReference>
<dbReference type="InterPro" id="IPR020081">
    <property type="entry name" value="SsrA-bd_prot_CS"/>
</dbReference>
<dbReference type="NCBIfam" id="NF003843">
    <property type="entry name" value="PRK05422.1"/>
    <property type="match status" value="1"/>
</dbReference>
<dbReference type="NCBIfam" id="TIGR00086">
    <property type="entry name" value="smpB"/>
    <property type="match status" value="1"/>
</dbReference>
<dbReference type="PANTHER" id="PTHR30308:SF2">
    <property type="entry name" value="SSRA-BINDING PROTEIN"/>
    <property type="match status" value="1"/>
</dbReference>
<dbReference type="PANTHER" id="PTHR30308">
    <property type="entry name" value="TMRNA-BINDING COMPONENT OF TRANS-TRANSLATION TAGGING COMPLEX"/>
    <property type="match status" value="1"/>
</dbReference>
<dbReference type="Pfam" id="PF01668">
    <property type="entry name" value="SmpB"/>
    <property type="match status" value="1"/>
</dbReference>
<dbReference type="SUPFAM" id="SSF74982">
    <property type="entry name" value="Small protein B (SmpB)"/>
    <property type="match status" value="1"/>
</dbReference>
<dbReference type="PROSITE" id="PS01317">
    <property type="entry name" value="SSRP"/>
    <property type="match status" value="1"/>
</dbReference>
<organism>
    <name type="scientific">Brucella suis biovar 1 (strain 1330)</name>
    <dbReference type="NCBI Taxonomy" id="204722"/>
    <lineage>
        <taxon>Bacteria</taxon>
        <taxon>Pseudomonadati</taxon>
        <taxon>Pseudomonadota</taxon>
        <taxon>Alphaproteobacteria</taxon>
        <taxon>Hyphomicrobiales</taxon>
        <taxon>Brucellaceae</taxon>
        <taxon>Brucella/Ochrobactrum group</taxon>
        <taxon>Brucella</taxon>
    </lineage>
</organism>
<name>SSRP_BRUSU</name>
<comment type="function">
    <text evidence="1">Required for rescue of stalled ribosomes mediated by trans-translation. Binds to transfer-messenger RNA (tmRNA), required for stable association of tmRNA with ribosomes. tmRNA and SmpB together mimic tRNA shape, replacing the anticodon stem-loop with SmpB. tmRNA is encoded by the ssrA gene; the 2 termini fold to resemble tRNA(Ala) and it encodes a 'tag peptide', a short internal open reading frame. During trans-translation Ala-aminoacylated tmRNA acts like a tRNA, entering the A-site of stalled ribosomes, displacing the stalled mRNA. The ribosome then switches to translate the ORF on the tmRNA; the nascent peptide is terminated with the 'tag peptide' encoded by the tmRNA and targeted for degradation. The ribosome is freed to recommence translation, which seems to be the essential function of trans-translation.</text>
</comment>
<comment type="subcellular location">
    <subcellularLocation>
        <location evidence="1">Cytoplasm</location>
    </subcellularLocation>
    <text evidence="1">The tmRNA-SmpB complex associates with stalled 70S ribosomes.</text>
</comment>
<comment type="similarity">
    <text evidence="1">Belongs to the SmpB family.</text>
</comment>